<organism>
    <name type="scientific">Lactobacillus delbrueckii subsp. bulgaricus (strain ATCC 11842 / DSM 20081 / BCRC 10696 / JCM 1002 / NBRC 13953 / NCIMB 11778 / NCTC 12712 / WDCM 00102 / Lb 14)</name>
    <dbReference type="NCBI Taxonomy" id="390333"/>
    <lineage>
        <taxon>Bacteria</taxon>
        <taxon>Bacillati</taxon>
        <taxon>Bacillota</taxon>
        <taxon>Bacilli</taxon>
        <taxon>Lactobacillales</taxon>
        <taxon>Lactobacillaceae</taxon>
        <taxon>Lactobacillus</taxon>
    </lineage>
</organism>
<sequence>MTKVVIENVHAREIFDSRGNPTVEVEVTLSNGVVGRAEVPSGASTGENEAVELRDGGSRLGGKGVMKAVNNVNTAINNELQGADPFNQPAIDKAMIELDGTPNKGKLGANAILGTSMATAVAAAKATHQPLYRYLGGTDLSMPQTFHNVINGGEHADNGIDIQEFMITPVKKTSFRDGFEKIVNTYHTLKKVLEEKGYETGLGDEGGFAPNMKDSEEALKALHEAIERAGYVPGEDIAIACDCAASYYYNKEDGKYHLEGKVLDGDQLAEYYDKLLAEFPELISMEDPYDENDTEGMVKFTQSHKDRLQIVLDDFICTNPRLLEKAIKEGAGNASLIKLNQIGTVTETLETIRISRKHGYNTMISHRSGETGDTFIADFAVATNGGQLKTGAPARSERVEKYNQLLRIEEQLGDGERLDFFPAQD</sequence>
<gene>
    <name evidence="1" type="primary">eno</name>
    <name type="ordered locus">Ldb1294</name>
</gene>
<name>ENO_LACDA</name>
<comment type="function">
    <text evidence="1">Catalyzes the reversible conversion of 2-phosphoglycerate (2-PG) into phosphoenolpyruvate (PEP). It is essential for the degradation of carbohydrates via glycolysis.</text>
</comment>
<comment type="catalytic activity">
    <reaction evidence="1">
        <text>(2R)-2-phosphoglycerate = phosphoenolpyruvate + H2O</text>
        <dbReference type="Rhea" id="RHEA:10164"/>
        <dbReference type="ChEBI" id="CHEBI:15377"/>
        <dbReference type="ChEBI" id="CHEBI:58289"/>
        <dbReference type="ChEBI" id="CHEBI:58702"/>
        <dbReference type="EC" id="4.2.1.11"/>
    </reaction>
</comment>
<comment type="cofactor">
    <cofactor evidence="1">
        <name>Mg(2+)</name>
        <dbReference type="ChEBI" id="CHEBI:18420"/>
    </cofactor>
    <text evidence="1">Binds a second Mg(2+) ion via substrate during catalysis.</text>
</comment>
<comment type="pathway">
    <text evidence="1">Carbohydrate degradation; glycolysis; pyruvate from D-glyceraldehyde 3-phosphate: step 4/5.</text>
</comment>
<comment type="subcellular location">
    <subcellularLocation>
        <location evidence="1">Cytoplasm</location>
    </subcellularLocation>
    <subcellularLocation>
        <location evidence="1">Secreted</location>
    </subcellularLocation>
    <subcellularLocation>
        <location evidence="1">Cell surface</location>
    </subcellularLocation>
    <text evidence="1">Fractions of enolase are present in both the cytoplasm and on the cell surface.</text>
</comment>
<comment type="similarity">
    <text evidence="1">Belongs to the enolase family.</text>
</comment>
<accession>Q1G9S9</accession>
<reference key="1">
    <citation type="journal article" date="2006" name="Proc. Natl. Acad. Sci. U.S.A.">
        <title>The complete genome sequence of Lactobacillus bulgaricus reveals extensive and ongoing reductive evolution.</title>
        <authorList>
            <person name="van de Guchte M."/>
            <person name="Penaud S."/>
            <person name="Grimaldi C."/>
            <person name="Barbe V."/>
            <person name="Bryson K."/>
            <person name="Nicolas P."/>
            <person name="Robert C."/>
            <person name="Oztas S."/>
            <person name="Mangenot S."/>
            <person name="Couloux A."/>
            <person name="Loux V."/>
            <person name="Dervyn R."/>
            <person name="Bossy R."/>
            <person name="Bolotin A."/>
            <person name="Batto J.-M."/>
            <person name="Walunas T."/>
            <person name="Gibrat J.-F."/>
            <person name="Bessieres P."/>
            <person name="Weissenbach J."/>
            <person name="Ehrlich S.D."/>
            <person name="Maguin E."/>
        </authorList>
    </citation>
    <scope>NUCLEOTIDE SEQUENCE [LARGE SCALE GENOMIC DNA]</scope>
    <source>
        <strain>ATCC 11842 / DSM 20081 / BCRC 10696 / JCM 1002 / NBRC 13953 / NCIMB 11778 / NCTC 12712 / WDCM 00102 / Lb 14</strain>
    </source>
</reference>
<keyword id="KW-0963">Cytoplasm</keyword>
<keyword id="KW-0324">Glycolysis</keyword>
<keyword id="KW-0456">Lyase</keyword>
<keyword id="KW-0460">Magnesium</keyword>
<keyword id="KW-0479">Metal-binding</keyword>
<keyword id="KW-1185">Reference proteome</keyword>
<keyword id="KW-0964">Secreted</keyword>
<feature type="chain" id="PRO_0000267047" description="Enolase">
    <location>
        <begin position="1"/>
        <end position="425"/>
    </location>
</feature>
<feature type="active site" description="Proton donor" evidence="1">
    <location>
        <position position="205"/>
    </location>
</feature>
<feature type="active site" description="Proton acceptor" evidence="1">
    <location>
        <position position="338"/>
    </location>
</feature>
<feature type="binding site" evidence="1">
    <location>
        <position position="163"/>
    </location>
    <ligand>
        <name>(2R)-2-phosphoglycerate</name>
        <dbReference type="ChEBI" id="CHEBI:58289"/>
    </ligand>
</feature>
<feature type="binding site" evidence="1">
    <location>
        <position position="242"/>
    </location>
    <ligand>
        <name>Mg(2+)</name>
        <dbReference type="ChEBI" id="CHEBI:18420"/>
    </ligand>
</feature>
<feature type="binding site" evidence="1">
    <location>
        <position position="286"/>
    </location>
    <ligand>
        <name>Mg(2+)</name>
        <dbReference type="ChEBI" id="CHEBI:18420"/>
    </ligand>
</feature>
<feature type="binding site" evidence="1">
    <location>
        <position position="313"/>
    </location>
    <ligand>
        <name>Mg(2+)</name>
        <dbReference type="ChEBI" id="CHEBI:18420"/>
    </ligand>
</feature>
<feature type="binding site" evidence="1">
    <location>
        <position position="338"/>
    </location>
    <ligand>
        <name>(2R)-2-phosphoglycerate</name>
        <dbReference type="ChEBI" id="CHEBI:58289"/>
    </ligand>
</feature>
<feature type="binding site" evidence="1">
    <location>
        <position position="367"/>
    </location>
    <ligand>
        <name>(2R)-2-phosphoglycerate</name>
        <dbReference type="ChEBI" id="CHEBI:58289"/>
    </ligand>
</feature>
<feature type="binding site" evidence="1">
    <location>
        <position position="368"/>
    </location>
    <ligand>
        <name>(2R)-2-phosphoglycerate</name>
        <dbReference type="ChEBI" id="CHEBI:58289"/>
    </ligand>
</feature>
<feature type="binding site" evidence="1">
    <location>
        <position position="389"/>
    </location>
    <ligand>
        <name>(2R)-2-phosphoglycerate</name>
        <dbReference type="ChEBI" id="CHEBI:58289"/>
    </ligand>
</feature>
<protein>
    <recommendedName>
        <fullName evidence="1">Enolase</fullName>
        <ecNumber evidence="1">4.2.1.11</ecNumber>
    </recommendedName>
    <alternativeName>
        <fullName evidence="1">2-phospho-D-glycerate hydro-lyase</fullName>
    </alternativeName>
    <alternativeName>
        <fullName evidence="1">2-phosphoglycerate dehydratase</fullName>
    </alternativeName>
</protein>
<dbReference type="EC" id="4.2.1.11" evidence="1"/>
<dbReference type="EMBL" id="CR954253">
    <property type="protein sequence ID" value="CAI98095.1"/>
    <property type="molecule type" value="Genomic_DNA"/>
</dbReference>
<dbReference type="RefSeq" id="WP_002879863.1">
    <property type="nucleotide sequence ID" value="NZ_JQAV01000005.1"/>
</dbReference>
<dbReference type="SMR" id="Q1G9S9"/>
<dbReference type="STRING" id="390333.Ldb1294"/>
<dbReference type="GeneID" id="69669139"/>
<dbReference type="KEGG" id="ldb:Ldb1294"/>
<dbReference type="PATRIC" id="fig|390333.13.peg.1614"/>
<dbReference type="eggNOG" id="COG0148">
    <property type="taxonomic scope" value="Bacteria"/>
</dbReference>
<dbReference type="HOGENOM" id="CLU_031223_2_1_9"/>
<dbReference type="BioCyc" id="LDEL390333:LDB_RS05525-MONOMER"/>
<dbReference type="UniPathway" id="UPA00109">
    <property type="reaction ID" value="UER00187"/>
</dbReference>
<dbReference type="Proteomes" id="UP000001259">
    <property type="component" value="Chromosome"/>
</dbReference>
<dbReference type="GO" id="GO:0009986">
    <property type="term" value="C:cell surface"/>
    <property type="evidence" value="ECO:0007669"/>
    <property type="project" value="UniProtKB-SubCell"/>
</dbReference>
<dbReference type="GO" id="GO:0005576">
    <property type="term" value="C:extracellular region"/>
    <property type="evidence" value="ECO:0007669"/>
    <property type="project" value="UniProtKB-SubCell"/>
</dbReference>
<dbReference type="GO" id="GO:0000015">
    <property type="term" value="C:phosphopyruvate hydratase complex"/>
    <property type="evidence" value="ECO:0007669"/>
    <property type="project" value="InterPro"/>
</dbReference>
<dbReference type="GO" id="GO:0000287">
    <property type="term" value="F:magnesium ion binding"/>
    <property type="evidence" value="ECO:0007669"/>
    <property type="project" value="UniProtKB-UniRule"/>
</dbReference>
<dbReference type="GO" id="GO:0004634">
    <property type="term" value="F:phosphopyruvate hydratase activity"/>
    <property type="evidence" value="ECO:0007669"/>
    <property type="project" value="UniProtKB-UniRule"/>
</dbReference>
<dbReference type="GO" id="GO:0006096">
    <property type="term" value="P:glycolytic process"/>
    <property type="evidence" value="ECO:0007669"/>
    <property type="project" value="UniProtKB-UniRule"/>
</dbReference>
<dbReference type="CDD" id="cd03313">
    <property type="entry name" value="enolase"/>
    <property type="match status" value="1"/>
</dbReference>
<dbReference type="FunFam" id="3.20.20.120:FF:000014">
    <property type="entry name" value="Enolase"/>
    <property type="match status" value="1"/>
</dbReference>
<dbReference type="FunFam" id="3.30.390.10:FF:000001">
    <property type="entry name" value="Enolase"/>
    <property type="match status" value="1"/>
</dbReference>
<dbReference type="Gene3D" id="3.20.20.120">
    <property type="entry name" value="Enolase-like C-terminal domain"/>
    <property type="match status" value="1"/>
</dbReference>
<dbReference type="Gene3D" id="3.30.390.10">
    <property type="entry name" value="Enolase-like, N-terminal domain"/>
    <property type="match status" value="1"/>
</dbReference>
<dbReference type="HAMAP" id="MF_00318">
    <property type="entry name" value="Enolase"/>
    <property type="match status" value="1"/>
</dbReference>
<dbReference type="InterPro" id="IPR000941">
    <property type="entry name" value="Enolase"/>
</dbReference>
<dbReference type="InterPro" id="IPR036849">
    <property type="entry name" value="Enolase-like_C_sf"/>
</dbReference>
<dbReference type="InterPro" id="IPR029017">
    <property type="entry name" value="Enolase-like_N"/>
</dbReference>
<dbReference type="InterPro" id="IPR020810">
    <property type="entry name" value="Enolase_C"/>
</dbReference>
<dbReference type="InterPro" id="IPR020809">
    <property type="entry name" value="Enolase_CS"/>
</dbReference>
<dbReference type="InterPro" id="IPR020811">
    <property type="entry name" value="Enolase_N"/>
</dbReference>
<dbReference type="NCBIfam" id="TIGR01060">
    <property type="entry name" value="eno"/>
    <property type="match status" value="1"/>
</dbReference>
<dbReference type="PANTHER" id="PTHR11902">
    <property type="entry name" value="ENOLASE"/>
    <property type="match status" value="1"/>
</dbReference>
<dbReference type="PANTHER" id="PTHR11902:SF1">
    <property type="entry name" value="ENOLASE"/>
    <property type="match status" value="1"/>
</dbReference>
<dbReference type="Pfam" id="PF00113">
    <property type="entry name" value="Enolase_C"/>
    <property type="match status" value="1"/>
</dbReference>
<dbReference type="Pfam" id="PF03952">
    <property type="entry name" value="Enolase_N"/>
    <property type="match status" value="1"/>
</dbReference>
<dbReference type="PIRSF" id="PIRSF001400">
    <property type="entry name" value="Enolase"/>
    <property type="match status" value="1"/>
</dbReference>
<dbReference type="PRINTS" id="PR00148">
    <property type="entry name" value="ENOLASE"/>
</dbReference>
<dbReference type="SFLD" id="SFLDS00001">
    <property type="entry name" value="Enolase"/>
    <property type="match status" value="1"/>
</dbReference>
<dbReference type="SFLD" id="SFLDF00002">
    <property type="entry name" value="enolase"/>
    <property type="match status" value="1"/>
</dbReference>
<dbReference type="SMART" id="SM01192">
    <property type="entry name" value="Enolase_C"/>
    <property type="match status" value="1"/>
</dbReference>
<dbReference type="SMART" id="SM01193">
    <property type="entry name" value="Enolase_N"/>
    <property type="match status" value="1"/>
</dbReference>
<dbReference type="SUPFAM" id="SSF51604">
    <property type="entry name" value="Enolase C-terminal domain-like"/>
    <property type="match status" value="1"/>
</dbReference>
<dbReference type="SUPFAM" id="SSF54826">
    <property type="entry name" value="Enolase N-terminal domain-like"/>
    <property type="match status" value="1"/>
</dbReference>
<dbReference type="PROSITE" id="PS00164">
    <property type="entry name" value="ENOLASE"/>
    <property type="match status" value="1"/>
</dbReference>
<proteinExistence type="inferred from homology"/>
<evidence type="ECO:0000255" key="1">
    <source>
        <dbReference type="HAMAP-Rule" id="MF_00318"/>
    </source>
</evidence>